<evidence type="ECO:0000255" key="1">
    <source>
        <dbReference type="HAMAP-Rule" id="MF_03154"/>
    </source>
</evidence>
<evidence type="ECO:0000256" key="2">
    <source>
        <dbReference type="SAM" id="MobiDB-lite"/>
    </source>
</evidence>
<feature type="chain" id="PRO_0000223190" description="Acireductone dioxygenase">
    <location>
        <begin position="1"/>
        <end position="179"/>
    </location>
</feature>
<feature type="region of interest" description="Disordered" evidence="2">
    <location>
        <begin position="1"/>
        <end position="21"/>
    </location>
</feature>
<feature type="binding site" evidence="1">
    <location>
        <position position="88"/>
    </location>
    <ligand>
        <name>Fe(2+)</name>
        <dbReference type="ChEBI" id="CHEBI:29033"/>
        <note>for iron-dependent acireductone dioxygenase activity</note>
    </ligand>
</feature>
<feature type="binding site" evidence="1">
    <location>
        <position position="88"/>
    </location>
    <ligand>
        <name>Ni(2+)</name>
        <dbReference type="ChEBI" id="CHEBI:49786"/>
        <note>for nickel-dependent acireductone dioxygenase activity</note>
    </ligand>
</feature>
<feature type="binding site" evidence="1">
    <location>
        <position position="90"/>
    </location>
    <ligand>
        <name>Fe(2+)</name>
        <dbReference type="ChEBI" id="CHEBI:29033"/>
        <note>for iron-dependent acireductone dioxygenase activity</note>
    </ligand>
</feature>
<feature type="binding site" evidence="1">
    <location>
        <position position="90"/>
    </location>
    <ligand>
        <name>Ni(2+)</name>
        <dbReference type="ChEBI" id="CHEBI:49786"/>
        <note>for nickel-dependent acireductone dioxygenase activity</note>
    </ligand>
</feature>
<feature type="binding site" evidence="1">
    <location>
        <position position="94"/>
    </location>
    <ligand>
        <name>Fe(2+)</name>
        <dbReference type="ChEBI" id="CHEBI:29033"/>
        <note>for iron-dependent acireductone dioxygenase activity</note>
    </ligand>
</feature>
<feature type="binding site" evidence="1">
    <location>
        <position position="94"/>
    </location>
    <ligand>
        <name>Ni(2+)</name>
        <dbReference type="ChEBI" id="CHEBI:49786"/>
        <note>for nickel-dependent acireductone dioxygenase activity</note>
    </ligand>
</feature>
<feature type="binding site" evidence="1">
    <location>
        <position position="133"/>
    </location>
    <ligand>
        <name>Fe(2+)</name>
        <dbReference type="ChEBI" id="CHEBI:29033"/>
        <note>for iron-dependent acireductone dioxygenase activity</note>
    </ligand>
</feature>
<feature type="binding site" evidence="1">
    <location>
        <position position="133"/>
    </location>
    <ligand>
        <name>Ni(2+)</name>
        <dbReference type="ChEBI" id="CHEBI:49786"/>
        <note>for nickel-dependent acireductone dioxygenase activity</note>
    </ligand>
</feature>
<reference key="1">
    <citation type="journal article" date="2010" name="Science">
        <title>The genome of the Western clawed frog Xenopus tropicalis.</title>
        <authorList>
            <person name="Hellsten U."/>
            <person name="Harland R.M."/>
            <person name="Gilchrist M.J."/>
            <person name="Hendrix D."/>
            <person name="Jurka J."/>
            <person name="Kapitonov V."/>
            <person name="Ovcharenko I."/>
            <person name="Putnam N.H."/>
            <person name="Shu S."/>
            <person name="Taher L."/>
            <person name="Blitz I.L."/>
            <person name="Blumberg B."/>
            <person name="Dichmann D.S."/>
            <person name="Dubchak I."/>
            <person name="Amaya E."/>
            <person name="Detter J.C."/>
            <person name="Fletcher R."/>
            <person name="Gerhard D.S."/>
            <person name="Goodstein D."/>
            <person name="Graves T."/>
            <person name="Grigoriev I.V."/>
            <person name="Grimwood J."/>
            <person name="Kawashima T."/>
            <person name="Lindquist E."/>
            <person name="Lucas S.M."/>
            <person name="Mead P.E."/>
            <person name="Mitros T."/>
            <person name="Ogino H."/>
            <person name="Ohta Y."/>
            <person name="Poliakov A.V."/>
            <person name="Pollet N."/>
            <person name="Robert J."/>
            <person name="Salamov A."/>
            <person name="Sater A.K."/>
            <person name="Schmutz J."/>
            <person name="Terry A."/>
            <person name="Vize P.D."/>
            <person name="Warren W.C."/>
            <person name="Wells D."/>
            <person name="Wills A."/>
            <person name="Wilson R.K."/>
            <person name="Zimmerman L.B."/>
            <person name="Zorn A.M."/>
            <person name="Grainger R."/>
            <person name="Grammer T."/>
            <person name="Khokha M.K."/>
            <person name="Richardson P.M."/>
            <person name="Rokhsar D.S."/>
        </authorList>
    </citation>
    <scope>NUCLEOTIDE SEQUENCE [LARGE SCALE GENOMIC DNA]</scope>
</reference>
<reference key="2">
    <citation type="submission" date="2004-06" db="EMBL/GenBank/DDBJ databases">
        <authorList>
            <consortium name="NIH - Xenopus Gene Collection (XGC) project"/>
        </authorList>
    </citation>
    <scope>NUCLEOTIDE SEQUENCE [LARGE SCALE MRNA]</scope>
</reference>
<organism>
    <name type="scientific">Xenopus tropicalis</name>
    <name type="common">Western clawed frog</name>
    <name type="synonym">Silurana tropicalis</name>
    <dbReference type="NCBI Taxonomy" id="8364"/>
    <lineage>
        <taxon>Eukaryota</taxon>
        <taxon>Metazoa</taxon>
        <taxon>Chordata</taxon>
        <taxon>Craniata</taxon>
        <taxon>Vertebrata</taxon>
        <taxon>Euteleostomi</taxon>
        <taxon>Amphibia</taxon>
        <taxon>Batrachia</taxon>
        <taxon>Anura</taxon>
        <taxon>Pipoidea</taxon>
        <taxon>Pipidae</taxon>
        <taxon>Xenopodinae</taxon>
        <taxon>Xenopus</taxon>
        <taxon>Silurana</taxon>
    </lineage>
</organism>
<keyword id="KW-0028">Amino-acid biosynthesis</keyword>
<keyword id="KW-1003">Cell membrane</keyword>
<keyword id="KW-0963">Cytoplasm</keyword>
<keyword id="KW-0223">Dioxygenase</keyword>
<keyword id="KW-0408">Iron</keyword>
<keyword id="KW-0472">Membrane</keyword>
<keyword id="KW-0479">Metal-binding</keyword>
<keyword id="KW-0486">Methionine biosynthesis</keyword>
<keyword id="KW-0533">Nickel</keyword>
<keyword id="KW-0539">Nucleus</keyword>
<keyword id="KW-0560">Oxidoreductase</keyword>
<keyword id="KW-1185">Reference proteome</keyword>
<dbReference type="EC" id="1.13.11.54" evidence="1"/>
<dbReference type="EC" id="1.13.11.53" evidence="1"/>
<dbReference type="EMBL" id="AAMC01056043">
    <property type="status" value="NOT_ANNOTATED_CDS"/>
    <property type="molecule type" value="Genomic_DNA"/>
</dbReference>
<dbReference type="EMBL" id="BC075403">
    <property type="protein sequence ID" value="AAH75403.1"/>
    <property type="molecule type" value="mRNA"/>
</dbReference>
<dbReference type="RefSeq" id="NP_001004933.1">
    <property type="nucleotide sequence ID" value="NM_001004933.1"/>
</dbReference>
<dbReference type="SMR" id="Q6DIY2"/>
<dbReference type="FunCoup" id="Q6DIY2">
    <property type="interactions" value="1575"/>
</dbReference>
<dbReference type="PaxDb" id="8364-ENSXETP00000000659"/>
<dbReference type="GeneID" id="448325"/>
<dbReference type="KEGG" id="xtr:448325"/>
<dbReference type="AGR" id="Xenbase:XB-GENE-952513"/>
<dbReference type="CTD" id="55256"/>
<dbReference type="Xenbase" id="XB-GENE-952513">
    <property type="gene designation" value="adi1"/>
</dbReference>
<dbReference type="eggNOG" id="KOG2107">
    <property type="taxonomic scope" value="Eukaryota"/>
</dbReference>
<dbReference type="HOGENOM" id="CLU_090154_0_1_1"/>
<dbReference type="InParanoid" id="Q6DIY2"/>
<dbReference type="OMA" id="WYMDESQ"/>
<dbReference type="OrthoDB" id="1867259at2759"/>
<dbReference type="PhylomeDB" id="Q6DIY2"/>
<dbReference type="UniPathway" id="UPA00904">
    <property type="reaction ID" value="UER00878"/>
</dbReference>
<dbReference type="Proteomes" id="UP000008143">
    <property type="component" value="Chromosome 5"/>
</dbReference>
<dbReference type="Bgee" id="ENSXETG00000006962">
    <property type="expression patterns" value="Expressed in skeletal muscle tissue and 13 other cell types or tissues"/>
</dbReference>
<dbReference type="GO" id="GO:0005737">
    <property type="term" value="C:cytoplasm"/>
    <property type="evidence" value="ECO:0000250"/>
    <property type="project" value="UniProtKB"/>
</dbReference>
<dbReference type="GO" id="GO:0005634">
    <property type="term" value="C:nucleus"/>
    <property type="evidence" value="ECO:0000250"/>
    <property type="project" value="UniProtKB"/>
</dbReference>
<dbReference type="GO" id="GO:0005886">
    <property type="term" value="C:plasma membrane"/>
    <property type="evidence" value="ECO:0000250"/>
    <property type="project" value="UniProtKB"/>
</dbReference>
<dbReference type="GO" id="GO:0010308">
    <property type="term" value="F:acireductone dioxygenase (Ni2+-requiring) activity"/>
    <property type="evidence" value="ECO:0007669"/>
    <property type="project" value="UniProtKB-UniRule"/>
</dbReference>
<dbReference type="GO" id="GO:0010309">
    <property type="term" value="F:acireductone dioxygenase [iron(II)-requiring] activity"/>
    <property type="evidence" value="ECO:0007669"/>
    <property type="project" value="UniProtKB-UniRule"/>
</dbReference>
<dbReference type="GO" id="GO:0005506">
    <property type="term" value="F:iron ion binding"/>
    <property type="evidence" value="ECO:0007669"/>
    <property type="project" value="UniProtKB-UniRule"/>
</dbReference>
<dbReference type="GO" id="GO:0016151">
    <property type="term" value="F:nickel cation binding"/>
    <property type="evidence" value="ECO:0007669"/>
    <property type="project" value="UniProtKB-UniRule"/>
</dbReference>
<dbReference type="GO" id="GO:0016491">
    <property type="term" value="F:oxidoreductase activity"/>
    <property type="evidence" value="ECO:0000250"/>
    <property type="project" value="UniProtKB"/>
</dbReference>
<dbReference type="GO" id="GO:0019509">
    <property type="term" value="P:L-methionine salvage from methylthioadenosine"/>
    <property type="evidence" value="ECO:0000250"/>
    <property type="project" value="UniProtKB"/>
</dbReference>
<dbReference type="CDD" id="cd02232">
    <property type="entry name" value="cupin_ARD"/>
    <property type="match status" value="1"/>
</dbReference>
<dbReference type="FunFam" id="2.60.120.10:FF:000031">
    <property type="entry name" value="1,2-dihydroxy-3-keto-5-methylthiopentene dioxygenase"/>
    <property type="match status" value="1"/>
</dbReference>
<dbReference type="Gene3D" id="2.60.120.10">
    <property type="entry name" value="Jelly Rolls"/>
    <property type="match status" value="1"/>
</dbReference>
<dbReference type="HAMAP" id="MF_03154">
    <property type="entry name" value="Salvage_MtnD_euk"/>
    <property type="match status" value="1"/>
</dbReference>
<dbReference type="InterPro" id="IPR004313">
    <property type="entry name" value="ARD"/>
</dbReference>
<dbReference type="InterPro" id="IPR027496">
    <property type="entry name" value="ARD_euk"/>
</dbReference>
<dbReference type="InterPro" id="IPR014710">
    <property type="entry name" value="RmlC-like_jellyroll"/>
</dbReference>
<dbReference type="InterPro" id="IPR011051">
    <property type="entry name" value="RmlC_Cupin_sf"/>
</dbReference>
<dbReference type="PANTHER" id="PTHR23418">
    <property type="entry name" value="ACIREDUCTONE DIOXYGENASE"/>
    <property type="match status" value="1"/>
</dbReference>
<dbReference type="PANTHER" id="PTHR23418:SF0">
    <property type="entry name" value="ACIREDUCTONE DIOXYGENASE"/>
    <property type="match status" value="1"/>
</dbReference>
<dbReference type="Pfam" id="PF03079">
    <property type="entry name" value="ARD"/>
    <property type="match status" value="1"/>
</dbReference>
<dbReference type="SUPFAM" id="SSF51182">
    <property type="entry name" value="RmlC-like cupins"/>
    <property type="match status" value="1"/>
</dbReference>
<accession>Q6DIY2</accession>
<accession>G1K3A0</accession>
<proteinExistence type="evidence at transcript level"/>
<gene>
    <name type="primary">adi1</name>
    <name type="synonym">mtcbp1</name>
</gene>
<protein>
    <recommendedName>
        <fullName evidence="1">Acireductone dioxygenase</fullName>
    </recommendedName>
    <alternativeName>
        <fullName evidence="1">Acireductone dioxygenase (Fe(2+)-requiring)</fullName>
        <shortName evidence="1">ARD'</shortName>
        <shortName evidence="1">Fe-ARD</shortName>
        <ecNumber evidence="1">1.13.11.54</ecNumber>
    </alternativeName>
    <alternativeName>
        <fullName evidence="1">Acireductone dioxygenase (Ni(2+)-requiring)</fullName>
        <shortName evidence="1">ARD</shortName>
        <shortName evidence="1">Ni-ARD</shortName>
        <ecNumber evidence="1">1.13.11.53</ecNumber>
    </alternativeName>
    <alternativeName>
        <fullName evidence="1">Membrane-type 1 matrix metalloproteinase cytoplasmic tail-binding protein 1</fullName>
        <shortName evidence="1">MTCBP-1</shortName>
    </alternativeName>
</protein>
<name>MTND_XENTR</name>
<comment type="function">
    <text evidence="1">Catalyzes 2 different reactions between oxygen and the acireductone 1,2-dihydroxy-3-keto-5-methylthiopentene (DHK-MTPene) depending upon the metal bound in the active site. Fe-containing acireductone dioxygenase (Fe-ARD) produces formate and 2-keto-4-methylthiobutyrate (KMTB), the alpha-ketoacid precursor of methionine in the methionine recycle pathway. Ni-containing acireductone dioxygenase (Ni-ARD) produces methylthiopropionate, carbon monoxide and formate, and does not lie on the methionine recycle pathway.</text>
</comment>
<comment type="catalytic activity">
    <reaction evidence="1">
        <text>1,2-dihydroxy-5-(methylsulfanyl)pent-1-en-3-one + O2 = 4-methylsulfanyl-2-oxobutanoate + formate + 2 H(+)</text>
        <dbReference type="Rhea" id="RHEA:24504"/>
        <dbReference type="ChEBI" id="CHEBI:15378"/>
        <dbReference type="ChEBI" id="CHEBI:15379"/>
        <dbReference type="ChEBI" id="CHEBI:15740"/>
        <dbReference type="ChEBI" id="CHEBI:16723"/>
        <dbReference type="ChEBI" id="CHEBI:49252"/>
        <dbReference type="EC" id="1.13.11.54"/>
    </reaction>
</comment>
<comment type="catalytic activity">
    <reaction evidence="1">
        <text>1,2-dihydroxy-5-(methylsulfanyl)pent-1-en-3-one + O2 = 3-(methylsulfanyl)propanoate + CO + formate + 2 H(+)</text>
        <dbReference type="Rhea" id="RHEA:14161"/>
        <dbReference type="ChEBI" id="CHEBI:15378"/>
        <dbReference type="ChEBI" id="CHEBI:15379"/>
        <dbReference type="ChEBI" id="CHEBI:15740"/>
        <dbReference type="ChEBI" id="CHEBI:17245"/>
        <dbReference type="ChEBI" id="CHEBI:49016"/>
        <dbReference type="ChEBI" id="CHEBI:49252"/>
        <dbReference type="EC" id="1.13.11.53"/>
    </reaction>
</comment>
<comment type="cofactor">
    <cofactor evidence="1">
        <name>Fe(2+)</name>
        <dbReference type="ChEBI" id="CHEBI:29033"/>
    </cofactor>
    <cofactor evidence="1">
        <name>Ni(2+)</name>
        <dbReference type="ChEBI" id="CHEBI:49786"/>
    </cofactor>
    <text evidence="1">Binds either 1 Fe or Ni cation per monomer. Iron-binding promotes an acireductone dioxygenase reaction producing 2-keto-4-methylthiobutyrate, while nickel-binding promotes an acireductone dioxygenase reaction producing 3-(methylsulfanyl)propanoate.</text>
</comment>
<comment type="pathway">
    <text evidence="1">Amino-acid biosynthesis; L-methionine biosynthesis via salvage pathway; L-methionine from S-methyl-5-thio-alpha-D-ribose 1-phosphate: step 5/6.</text>
</comment>
<comment type="subunit">
    <text evidence="1">Monomer. Interacts with MMP14.</text>
</comment>
<comment type="subcellular location">
    <subcellularLocation>
        <location evidence="1">Cytoplasm</location>
    </subcellularLocation>
    <subcellularLocation>
        <location evidence="1">Nucleus</location>
    </subcellularLocation>
    <subcellularLocation>
        <location evidence="1">Cell membrane</location>
        <topology evidence="1">Peripheral membrane protein</topology>
        <orientation evidence="1">Cytoplasmic side</orientation>
    </subcellularLocation>
    <text evidence="1">Localizes to the plasma membrane when complexed to MMP14.</text>
</comment>
<comment type="similarity">
    <text evidence="1">Belongs to the acireductone dioxygenase (ARD) family.</text>
</comment>
<sequence length="179" mass="21494">MVQAWYMDDSTEDQRKPHHLQPEQPVSLEQLKAVGVHSFSLDADRYESDPELAKIRQENNYTWMDIITIHKDTLPNYEEKLKIFYEEHLHLDDEIRYILEGSGYFDVRDKEDRWIRIFMQKGDMITLPAGIYHRFTLDENNYVKAMRLFVGDPVWTPYNRPADNFEAREKYVQFLTQTV</sequence>